<proteinExistence type="inferred from homology"/>
<dbReference type="EC" id="2.8.1.6" evidence="1"/>
<dbReference type="EMBL" id="CP000903">
    <property type="protein sequence ID" value="ABY45113.1"/>
    <property type="molecule type" value="Genomic_DNA"/>
</dbReference>
<dbReference type="RefSeq" id="WP_002014986.1">
    <property type="nucleotide sequence ID" value="NC_010184.1"/>
</dbReference>
<dbReference type="SMR" id="A9VG53"/>
<dbReference type="KEGG" id="bwe:BcerKBAB4_3946"/>
<dbReference type="eggNOG" id="COG0502">
    <property type="taxonomic scope" value="Bacteria"/>
</dbReference>
<dbReference type="HOGENOM" id="CLU_033172_2_1_9"/>
<dbReference type="UniPathway" id="UPA00078">
    <property type="reaction ID" value="UER00162"/>
</dbReference>
<dbReference type="Proteomes" id="UP000002154">
    <property type="component" value="Chromosome"/>
</dbReference>
<dbReference type="GO" id="GO:0051537">
    <property type="term" value="F:2 iron, 2 sulfur cluster binding"/>
    <property type="evidence" value="ECO:0007669"/>
    <property type="project" value="UniProtKB-KW"/>
</dbReference>
<dbReference type="GO" id="GO:0051539">
    <property type="term" value="F:4 iron, 4 sulfur cluster binding"/>
    <property type="evidence" value="ECO:0007669"/>
    <property type="project" value="UniProtKB-KW"/>
</dbReference>
<dbReference type="GO" id="GO:0004076">
    <property type="term" value="F:biotin synthase activity"/>
    <property type="evidence" value="ECO:0007669"/>
    <property type="project" value="UniProtKB-UniRule"/>
</dbReference>
<dbReference type="GO" id="GO:0005506">
    <property type="term" value="F:iron ion binding"/>
    <property type="evidence" value="ECO:0007669"/>
    <property type="project" value="UniProtKB-UniRule"/>
</dbReference>
<dbReference type="GO" id="GO:0009102">
    <property type="term" value="P:biotin biosynthetic process"/>
    <property type="evidence" value="ECO:0007669"/>
    <property type="project" value="UniProtKB-UniRule"/>
</dbReference>
<dbReference type="CDD" id="cd01335">
    <property type="entry name" value="Radical_SAM"/>
    <property type="match status" value="1"/>
</dbReference>
<dbReference type="FunFam" id="3.20.20.70:FF:000026">
    <property type="entry name" value="Biotin synthase"/>
    <property type="match status" value="1"/>
</dbReference>
<dbReference type="Gene3D" id="3.20.20.70">
    <property type="entry name" value="Aldolase class I"/>
    <property type="match status" value="1"/>
</dbReference>
<dbReference type="HAMAP" id="MF_01694">
    <property type="entry name" value="BioB"/>
    <property type="match status" value="1"/>
</dbReference>
<dbReference type="InterPro" id="IPR013785">
    <property type="entry name" value="Aldolase_TIM"/>
</dbReference>
<dbReference type="InterPro" id="IPR010722">
    <property type="entry name" value="BATS_dom"/>
</dbReference>
<dbReference type="InterPro" id="IPR002684">
    <property type="entry name" value="Biotin_synth/BioAB"/>
</dbReference>
<dbReference type="InterPro" id="IPR024177">
    <property type="entry name" value="Biotin_synthase"/>
</dbReference>
<dbReference type="InterPro" id="IPR006638">
    <property type="entry name" value="Elp3/MiaA/NifB-like_rSAM"/>
</dbReference>
<dbReference type="InterPro" id="IPR007197">
    <property type="entry name" value="rSAM"/>
</dbReference>
<dbReference type="NCBIfam" id="TIGR00433">
    <property type="entry name" value="bioB"/>
    <property type="match status" value="1"/>
</dbReference>
<dbReference type="PANTHER" id="PTHR22976">
    <property type="entry name" value="BIOTIN SYNTHASE"/>
    <property type="match status" value="1"/>
</dbReference>
<dbReference type="PANTHER" id="PTHR22976:SF2">
    <property type="entry name" value="BIOTIN SYNTHASE, MITOCHONDRIAL"/>
    <property type="match status" value="1"/>
</dbReference>
<dbReference type="Pfam" id="PF06968">
    <property type="entry name" value="BATS"/>
    <property type="match status" value="1"/>
</dbReference>
<dbReference type="Pfam" id="PF04055">
    <property type="entry name" value="Radical_SAM"/>
    <property type="match status" value="1"/>
</dbReference>
<dbReference type="PIRSF" id="PIRSF001619">
    <property type="entry name" value="Biotin_synth"/>
    <property type="match status" value="1"/>
</dbReference>
<dbReference type="SFLD" id="SFLDG01060">
    <property type="entry name" value="BATS_domain_containing"/>
    <property type="match status" value="1"/>
</dbReference>
<dbReference type="SFLD" id="SFLDG01278">
    <property type="entry name" value="biotin_synthase_like"/>
    <property type="match status" value="1"/>
</dbReference>
<dbReference type="SMART" id="SM00876">
    <property type="entry name" value="BATS"/>
    <property type="match status" value="1"/>
</dbReference>
<dbReference type="SMART" id="SM00729">
    <property type="entry name" value="Elp3"/>
    <property type="match status" value="1"/>
</dbReference>
<dbReference type="SUPFAM" id="SSF102114">
    <property type="entry name" value="Radical SAM enzymes"/>
    <property type="match status" value="1"/>
</dbReference>
<dbReference type="PROSITE" id="PS51918">
    <property type="entry name" value="RADICAL_SAM"/>
    <property type="match status" value="1"/>
</dbReference>
<sequence>MKQVQTKRDWKKLAYDVVEEKMITKEDAIAILEADDTEVLEIMNAAYIIRHHHFGKKVKLNMIINTKSGLCPEDCGYCSQSIISEAPIDKYAWLTQEKIVEGAHEAIRRKAGTYCIVASGRRPTNKEVNHVIGAVKEIRETTDLKICCCLGFLNEDQAGQLAEAGVHRYNHNLNTHANNYDSICSTHTYDDRVDTVQKAKQAGISPCSGAIFGMGETIEQRAEIAFELQRLDADSIPCNFLVAVKGTPLEGQKELTPVECLKVLAMMRFVNPTKEIRISGGRELNLRSVQPLGLFAANSIFVGDYLTTAGQEPTADWGMIEDLGFEIEECAL</sequence>
<protein>
    <recommendedName>
        <fullName evidence="1">Biotin synthase</fullName>
        <ecNumber evidence="1">2.8.1.6</ecNumber>
    </recommendedName>
</protein>
<evidence type="ECO:0000255" key="1">
    <source>
        <dbReference type="HAMAP-Rule" id="MF_01694"/>
    </source>
</evidence>
<evidence type="ECO:0000255" key="2">
    <source>
        <dbReference type="PROSITE-ProRule" id="PRU01266"/>
    </source>
</evidence>
<keyword id="KW-0001">2Fe-2S</keyword>
<keyword id="KW-0004">4Fe-4S</keyword>
<keyword id="KW-0093">Biotin biosynthesis</keyword>
<keyword id="KW-0408">Iron</keyword>
<keyword id="KW-0411">Iron-sulfur</keyword>
<keyword id="KW-0479">Metal-binding</keyword>
<keyword id="KW-0949">S-adenosyl-L-methionine</keyword>
<keyword id="KW-0808">Transferase</keyword>
<feature type="chain" id="PRO_0000381235" description="Biotin synthase">
    <location>
        <begin position="1"/>
        <end position="332"/>
    </location>
</feature>
<feature type="domain" description="Radical SAM core" evidence="2">
    <location>
        <begin position="53"/>
        <end position="282"/>
    </location>
</feature>
<feature type="binding site" evidence="1">
    <location>
        <position position="71"/>
    </location>
    <ligand>
        <name>[4Fe-4S] cluster</name>
        <dbReference type="ChEBI" id="CHEBI:49883"/>
        <note>4Fe-4S-S-AdoMet</note>
    </ligand>
</feature>
<feature type="binding site" evidence="1">
    <location>
        <position position="75"/>
    </location>
    <ligand>
        <name>[4Fe-4S] cluster</name>
        <dbReference type="ChEBI" id="CHEBI:49883"/>
        <note>4Fe-4S-S-AdoMet</note>
    </ligand>
</feature>
<feature type="binding site" evidence="1">
    <location>
        <position position="78"/>
    </location>
    <ligand>
        <name>[4Fe-4S] cluster</name>
        <dbReference type="ChEBI" id="CHEBI:49883"/>
        <note>4Fe-4S-S-AdoMet</note>
    </ligand>
</feature>
<feature type="binding site" evidence="1">
    <location>
        <position position="115"/>
    </location>
    <ligand>
        <name>[2Fe-2S] cluster</name>
        <dbReference type="ChEBI" id="CHEBI:190135"/>
    </ligand>
</feature>
<feature type="binding site" evidence="1">
    <location>
        <position position="147"/>
    </location>
    <ligand>
        <name>[2Fe-2S] cluster</name>
        <dbReference type="ChEBI" id="CHEBI:190135"/>
    </ligand>
</feature>
<feature type="binding site" evidence="1">
    <location>
        <position position="207"/>
    </location>
    <ligand>
        <name>[2Fe-2S] cluster</name>
        <dbReference type="ChEBI" id="CHEBI:190135"/>
    </ligand>
</feature>
<feature type="binding site" evidence="1">
    <location>
        <position position="277"/>
    </location>
    <ligand>
        <name>[2Fe-2S] cluster</name>
        <dbReference type="ChEBI" id="CHEBI:190135"/>
    </ligand>
</feature>
<comment type="function">
    <text evidence="1">Catalyzes the conversion of dethiobiotin (DTB) to biotin by the insertion of a sulfur atom into dethiobiotin via a radical-based mechanism.</text>
</comment>
<comment type="catalytic activity">
    <reaction evidence="1">
        <text>(4R,5S)-dethiobiotin + (sulfur carrier)-SH + 2 reduced [2Fe-2S]-[ferredoxin] + 2 S-adenosyl-L-methionine = (sulfur carrier)-H + biotin + 2 5'-deoxyadenosine + 2 L-methionine + 2 oxidized [2Fe-2S]-[ferredoxin]</text>
        <dbReference type="Rhea" id="RHEA:22060"/>
        <dbReference type="Rhea" id="RHEA-COMP:10000"/>
        <dbReference type="Rhea" id="RHEA-COMP:10001"/>
        <dbReference type="Rhea" id="RHEA-COMP:14737"/>
        <dbReference type="Rhea" id="RHEA-COMP:14739"/>
        <dbReference type="ChEBI" id="CHEBI:17319"/>
        <dbReference type="ChEBI" id="CHEBI:29917"/>
        <dbReference type="ChEBI" id="CHEBI:33737"/>
        <dbReference type="ChEBI" id="CHEBI:33738"/>
        <dbReference type="ChEBI" id="CHEBI:57586"/>
        <dbReference type="ChEBI" id="CHEBI:57844"/>
        <dbReference type="ChEBI" id="CHEBI:59789"/>
        <dbReference type="ChEBI" id="CHEBI:64428"/>
        <dbReference type="ChEBI" id="CHEBI:149473"/>
        <dbReference type="EC" id="2.8.1.6"/>
    </reaction>
</comment>
<comment type="cofactor">
    <cofactor evidence="1">
        <name>[4Fe-4S] cluster</name>
        <dbReference type="ChEBI" id="CHEBI:49883"/>
    </cofactor>
    <text evidence="1">Binds 1 [4Fe-4S] cluster. The cluster is coordinated with 3 cysteines and an exchangeable S-adenosyl-L-methionine.</text>
</comment>
<comment type="cofactor">
    <cofactor evidence="1">
        <name>[2Fe-2S] cluster</name>
        <dbReference type="ChEBI" id="CHEBI:190135"/>
    </cofactor>
    <text evidence="1">Binds 1 [2Fe-2S] cluster. The cluster is coordinated with 3 cysteines and 1 arginine.</text>
</comment>
<comment type="pathway">
    <text evidence="1">Cofactor biosynthesis; biotin biosynthesis; biotin from 7,8-diaminononanoate: step 2/2.</text>
</comment>
<comment type="subunit">
    <text evidence="1">Homodimer.</text>
</comment>
<comment type="similarity">
    <text evidence="1">Belongs to the radical SAM superfamily. Biotin synthase family.</text>
</comment>
<name>BIOB_BACMK</name>
<organism>
    <name type="scientific">Bacillus mycoides (strain KBAB4)</name>
    <name type="common">Bacillus weihenstephanensis</name>
    <dbReference type="NCBI Taxonomy" id="315730"/>
    <lineage>
        <taxon>Bacteria</taxon>
        <taxon>Bacillati</taxon>
        <taxon>Bacillota</taxon>
        <taxon>Bacilli</taxon>
        <taxon>Bacillales</taxon>
        <taxon>Bacillaceae</taxon>
        <taxon>Bacillus</taxon>
        <taxon>Bacillus cereus group</taxon>
    </lineage>
</organism>
<reference key="1">
    <citation type="journal article" date="2008" name="Chem. Biol. Interact.">
        <title>Extending the Bacillus cereus group genomics to putative food-borne pathogens of different toxicity.</title>
        <authorList>
            <person name="Lapidus A."/>
            <person name="Goltsman E."/>
            <person name="Auger S."/>
            <person name="Galleron N."/>
            <person name="Segurens B."/>
            <person name="Dossat C."/>
            <person name="Land M.L."/>
            <person name="Broussolle V."/>
            <person name="Brillard J."/>
            <person name="Guinebretiere M.-H."/>
            <person name="Sanchis V."/>
            <person name="Nguen-the C."/>
            <person name="Lereclus D."/>
            <person name="Richardson P."/>
            <person name="Wincker P."/>
            <person name="Weissenbach J."/>
            <person name="Ehrlich S.D."/>
            <person name="Sorokin A."/>
        </authorList>
    </citation>
    <scope>NUCLEOTIDE SEQUENCE [LARGE SCALE GENOMIC DNA]</scope>
    <source>
        <strain>KBAB4</strain>
    </source>
</reference>
<accession>A9VG53</accession>
<gene>
    <name evidence="1" type="primary">bioB</name>
    <name type="ordered locus">BcerKBAB4_3946</name>
</gene>